<comment type="function">
    <text evidence="1">Non catalytic subunit of RNase H2, an endonuclease that specifically degrades the RNA of RNA:DNA hybrids. Participates in DNA replication, possibly by mediating the removal of lagging-strand Okazaki fragment RNA primers during DNA replication. Mediates the excision of single ribonucleotides from DNA:RNA duplexes (By similarity).</text>
</comment>
<comment type="subunit">
    <text evidence="1">The RNase H2 complex is a heterotrimer composed of the catalytic subunit RNASEH2A and the non-catalytic subunits RNASEH2B and RNASEH2C.</text>
</comment>
<comment type="subcellular location">
    <subcellularLocation>
        <location evidence="1">Nucleus</location>
    </subcellularLocation>
</comment>
<comment type="similarity">
    <text evidence="3">Belongs to the RNase H2 subunit B family.</text>
</comment>
<evidence type="ECO:0000250" key="1"/>
<evidence type="ECO:0000256" key="2">
    <source>
        <dbReference type="SAM" id="MobiDB-lite"/>
    </source>
</evidence>
<evidence type="ECO:0000305" key="3"/>
<reference key="1">
    <citation type="submission" date="2005-01" db="EMBL/GenBank/DDBJ databases">
        <authorList>
            <consortium name="NIH - Xenopus Gene Collection (XGC) project"/>
        </authorList>
    </citation>
    <scope>NUCLEOTIDE SEQUENCE [LARGE SCALE MRNA]</scope>
    <source>
        <tissue>Egg</tissue>
    </source>
</reference>
<proteinExistence type="evidence at transcript level"/>
<keyword id="KW-0539">Nucleus</keyword>
<keyword id="KW-1185">Reference proteome</keyword>
<gene>
    <name type="primary">rnaseh2b</name>
</gene>
<dbReference type="EMBL" id="BC088940">
    <property type="protein sequence ID" value="AAH88940.1"/>
    <property type="molecule type" value="mRNA"/>
</dbReference>
<dbReference type="RefSeq" id="NP_001088963.1">
    <property type="nucleotide sequence ID" value="NM_001095494.1"/>
</dbReference>
<dbReference type="SMR" id="Q5HZP1"/>
<dbReference type="DNASU" id="496343"/>
<dbReference type="GeneID" id="496343"/>
<dbReference type="KEGG" id="xla:496343"/>
<dbReference type="AGR" id="Xenbase:XB-GENE-1004449"/>
<dbReference type="CTD" id="496343"/>
<dbReference type="Xenbase" id="XB-GENE-1004449">
    <property type="gene designation" value="rnaseh2b.L"/>
</dbReference>
<dbReference type="OMA" id="AQWVLIA"/>
<dbReference type="OrthoDB" id="29098at2759"/>
<dbReference type="Proteomes" id="UP000186698">
    <property type="component" value="Chromosome 2L"/>
</dbReference>
<dbReference type="Bgee" id="496343">
    <property type="expression patterns" value="Expressed in egg cell and 19 other cell types or tissues"/>
</dbReference>
<dbReference type="GO" id="GO:0005654">
    <property type="term" value="C:nucleoplasm"/>
    <property type="evidence" value="ECO:0000318"/>
    <property type="project" value="GO_Central"/>
</dbReference>
<dbReference type="GO" id="GO:0032299">
    <property type="term" value="C:ribonuclease H2 complex"/>
    <property type="evidence" value="ECO:0000250"/>
    <property type="project" value="UniProtKB"/>
</dbReference>
<dbReference type="GO" id="GO:0006401">
    <property type="term" value="P:RNA catabolic process"/>
    <property type="evidence" value="ECO:0000250"/>
    <property type="project" value="UniProtKB"/>
</dbReference>
<dbReference type="CDD" id="cd09270">
    <property type="entry name" value="RNase_H2-B"/>
    <property type="match status" value="1"/>
</dbReference>
<dbReference type="FunFam" id="1.10.20.120:FF:000001">
    <property type="entry name" value="Ribonuclease H2 subunit B"/>
    <property type="match status" value="1"/>
</dbReference>
<dbReference type="FunFam" id="2.20.25.530:FF:000001">
    <property type="entry name" value="Ribonuclease H2 subunit B"/>
    <property type="match status" value="1"/>
</dbReference>
<dbReference type="Gene3D" id="1.10.20.120">
    <property type="match status" value="1"/>
</dbReference>
<dbReference type="Gene3D" id="2.20.25.530">
    <property type="match status" value="1"/>
</dbReference>
<dbReference type="InterPro" id="IPR040456">
    <property type="entry name" value="RNase_H2_suB"/>
</dbReference>
<dbReference type="InterPro" id="IPR019024">
    <property type="entry name" value="RNase_H2_suB_wHTH"/>
</dbReference>
<dbReference type="InterPro" id="IPR041195">
    <property type="entry name" value="Rnh202_N"/>
</dbReference>
<dbReference type="PANTHER" id="PTHR13383">
    <property type="entry name" value="RIBONUCLEASE H2 SUBUNIT B"/>
    <property type="match status" value="1"/>
</dbReference>
<dbReference type="PANTHER" id="PTHR13383:SF11">
    <property type="entry name" value="RIBONUCLEASE H2 SUBUNIT B"/>
    <property type="match status" value="1"/>
</dbReference>
<dbReference type="Pfam" id="PF09468">
    <property type="entry name" value="RNase_H2-Ydr279"/>
    <property type="match status" value="1"/>
</dbReference>
<dbReference type="Pfam" id="PF17745">
    <property type="entry name" value="Ydr279_N"/>
    <property type="match status" value="1"/>
</dbReference>
<sequence>MVSRRKAPRSGQSEQWVLLAPESLSGDAKNLSDETVFVKLRAPFADKGAMFLFINSGQQICEVKAFHEEYRSWFIGQTVQQDGRLLIATPIDPLFLVLPYLIKADKEQGKFQPVEQIVVDEEFPSCGMLLQCTPVAKSLHHVTEEKEIGSKKFHKYSKEKALVWLKKKVDQTVKVLKSSKVCVGGGVQSATFIRSTQGSDVKEEDYTRYAHGLISEYLTEDLREDLSKYLGLPDLSSPTPEPPVKKRRVSDAPVEADEDYTKYNSDNKSRKSNSKMTAAQKSLAKVDKSGMKNISAFFSPKAKAAK</sequence>
<name>RNH2B_XENLA</name>
<organism>
    <name type="scientific">Xenopus laevis</name>
    <name type="common">African clawed frog</name>
    <dbReference type="NCBI Taxonomy" id="8355"/>
    <lineage>
        <taxon>Eukaryota</taxon>
        <taxon>Metazoa</taxon>
        <taxon>Chordata</taxon>
        <taxon>Craniata</taxon>
        <taxon>Vertebrata</taxon>
        <taxon>Euteleostomi</taxon>
        <taxon>Amphibia</taxon>
        <taxon>Batrachia</taxon>
        <taxon>Anura</taxon>
        <taxon>Pipoidea</taxon>
        <taxon>Pipidae</taxon>
        <taxon>Xenopodinae</taxon>
        <taxon>Xenopus</taxon>
        <taxon>Xenopus</taxon>
    </lineage>
</organism>
<accession>Q5HZP1</accession>
<feature type="chain" id="PRO_0000248381" description="Ribonuclease H2 subunit B">
    <location>
        <begin position="1"/>
        <end position="306"/>
    </location>
</feature>
<feature type="region of interest" description="Disordered" evidence="2">
    <location>
        <begin position="232"/>
        <end position="285"/>
    </location>
</feature>
<feature type="compositionally biased region" description="Basic and acidic residues" evidence="2">
    <location>
        <begin position="259"/>
        <end position="269"/>
    </location>
</feature>
<protein>
    <recommendedName>
        <fullName>Ribonuclease H2 subunit B</fullName>
        <shortName>RNase H2 subunit B</shortName>
    </recommendedName>
    <alternativeName>
        <fullName>Ribonuclease HI subunit B</fullName>
    </alternativeName>
</protein>